<reference key="1">
    <citation type="journal article" date="2003" name="Nature">
        <title>Genome divergence in two Prochlorococcus ecotypes reflects oceanic niche differentiation.</title>
        <authorList>
            <person name="Rocap G."/>
            <person name="Larimer F.W."/>
            <person name="Lamerdin J.E."/>
            <person name="Malfatti S."/>
            <person name="Chain P."/>
            <person name="Ahlgren N.A."/>
            <person name="Arellano A."/>
            <person name="Coleman M."/>
            <person name="Hauser L."/>
            <person name="Hess W.R."/>
            <person name="Johnson Z.I."/>
            <person name="Land M.L."/>
            <person name="Lindell D."/>
            <person name="Post A.F."/>
            <person name="Regala W."/>
            <person name="Shah M."/>
            <person name="Shaw S.L."/>
            <person name="Steglich C."/>
            <person name="Sullivan M.B."/>
            <person name="Ting C.S."/>
            <person name="Tolonen A."/>
            <person name="Webb E.A."/>
            <person name="Zinser E.R."/>
            <person name="Chisholm S.W."/>
        </authorList>
    </citation>
    <scope>NUCLEOTIDE SEQUENCE [LARGE SCALE GENOMIC DNA]</scope>
    <source>
        <strain>CCMP1986 / NIES-2087 / MED4</strain>
    </source>
</reference>
<name>PLSY_PROMP</name>
<accession>Q7V0D9</accession>
<evidence type="ECO:0000255" key="1">
    <source>
        <dbReference type="HAMAP-Rule" id="MF_01043"/>
    </source>
</evidence>
<organism>
    <name type="scientific">Prochlorococcus marinus subsp. pastoris (strain CCMP1986 / NIES-2087 / MED4)</name>
    <dbReference type="NCBI Taxonomy" id="59919"/>
    <lineage>
        <taxon>Bacteria</taxon>
        <taxon>Bacillati</taxon>
        <taxon>Cyanobacteriota</taxon>
        <taxon>Cyanophyceae</taxon>
        <taxon>Synechococcales</taxon>
        <taxon>Prochlorococcaceae</taxon>
        <taxon>Prochlorococcus</taxon>
    </lineage>
</organism>
<gene>
    <name evidence="1" type="primary">plsY</name>
    <name type="ordered locus">PMM1327</name>
</gene>
<feature type="chain" id="PRO_0000188426" description="Glycerol-3-phosphate acyltransferase">
    <location>
        <begin position="1"/>
        <end position="198"/>
    </location>
</feature>
<feature type="transmembrane region" description="Helical" evidence="1">
    <location>
        <begin position="1"/>
        <end position="21"/>
    </location>
</feature>
<feature type="transmembrane region" description="Helical" evidence="1">
    <location>
        <begin position="50"/>
        <end position="70"/>
    </location>
</feature>
<feature type="transmembrane region" description="Helical" evidence="1">
    <location>
        <begin position="77"/>
        <end position="97"/>
    </location>
</feature>
<feature type="transmembrane region" description="Helical" evidence="1">
    <location>
        <begin position="111"/>
        <end position="131"/>
    </location>
</feature>
<feature type="transmembrane region" description="Helical" evidence="1">
    <location>
        <begin position="136"/>
        <end position="156"/>
    </location>
</feature>
<feature type="transmembrane region" description="Helical" evidence="1">
    <location>
        <begin position="157"/>
        <end position="177"/>
    </location>
</feature>
<comment type="function">
    <text evidence="1">Catalyzes the transfer of an acyl group from acyl-phosphate (acyl-PO(4)) to glycerol-3-phosphate (G3P) to form lysophosphatidic acid (LPA). This enzyme utilizes acyl-phosphate as fatty acyl donor, but not acyl-CoA or acyl-ACP.</text>
</comment>
<comment type="catalytic activity">
    <reaction evidence="1">
        <text>an acyl phosphate + sn-glycerol 3-phosphate = a 1-acyl-sn-glycero-3-phosphate + phosphate</text>
        <dbReference type="Rhea" id="RHEA:34075"/>
        <dbReference type="ChEBI" id="CHEBI:43474"/>
        <dbReference type="ChEBI" id="CHEBI:57597"/>
        <dbReference type="ChEBI" id="CHEBI:57970"/>
        <dbReference type="ChEBI" id="CHEBI:59918"/>
        <dbReference type="EC" id="2.3.1.275"/>
    </reaction>
</comment>
<comment type="pathway">
    <text evidence="1">Lipid metabolism; phospholipid metabolism.</text>
</comment>
<comment type="subunit">
    <text evidence="1">Probably interacts with PlsX.</text>
</comment>
<comment type="subcellular location">
    <subcellularLocation>
        <location evidence="1">Cell inner membrane</location>
        <topology evidence="1">Multi-pass membrane protein</topology>
    </subcellularLocation>
</comment>
<comment type="similarity">
    <text evidence="1">Belongs to the PlsY family.</text>
</comment>
<keyword id="KW-0997">Cell inner membrane</keyword>
<keyword id="KW-1003">Cell membrane</keyword>
<keyword id="KW-0444">Lipid biosynthesis</keyword>
<keyword id="KW-0443">Lipid metabolism</keyword>
<keyword id="KW-0472">Membrane</keyword>
<keyword id="KW-0594">Phospholipid biosynthesis</keyword>
<keyword id="KW-1208">Phospholipid metabolism</keyword>
<keyword id="KW-0808">Transferase</keyword>
<keyword id="KW-0812">Transmembrane</keyword>
<keyword id="KW-1133">Transmembrane helix</keyword>
<protein>
    <recommendedName>
        <fullName evidence="1">Glycerol-3-phosphate acyltransferase</fullName>
    </recommendedName>
    <alternativeName>
        <fullName evidence="1">Acyl-PO4 G3P acyltransferase</fullName>
    </alternativeName>
    <alternativeName>
        <fullName evidence="1">Acyl-phosphate--glycerol-3-phosphate acyltransferase</fullName>
    </alternativeName>
    <alternativeName>
        <fullName evidence="1">G3P acyltransferase</fullName>
        <shortName evidence="1">GPAT</shortName>
        <ecNumber evidence="1">2.3.1.275</ecNumber>
    </alternativeName>
    <alternativeName>
        <fullName evidence="1">Lysophosphatidic acid synthase</fullName>
        <shortName evidence="1">LPA synthase</shortName>
    </alternativeName>
</protein>
<dbReference type="EC" id="2.3.1.275" evidence="1"/>
<dbReference type="EMBL" id="BX548174">
    <property type="protein sequence ID" value="CAE19786.1"/>
    <property type="molecule type" value="Genomic_DNA"/>
</dbReference>
<dbReference type="RefSeq" id="WP_011132961.1">
    <property type="nucleotide sequence ID" value="NC_005072.1"/>
</dbReference>
<dbReference type="SMR" id="Q7V0D9"/>
<dbReference type="STRING" id="59919.PMM1327"/>
<dbReference type="KEGG" id="pmm:PMM1327"/>
<dbReference type="eggNOG" id="COG0344">
    <property type="taxonomic scope" value="Bacteria"/>
</dbReference>
<dbReference type="HOGENOM" id="CLU_081254_7_1_3"/>
<dbReference type="OrthoDB" id="9777124at2"/>
<dbReference type="UniPathway" id="UPA00085"/>
<dbReference type="Proteomes" id="UP000001026">
    <property type="component" value="Chromosome"/>
</dbReference>
<dbReference type="GO" id="GO:0005886">
    <property type="term" value="C:plasma membrane"/>
    <property type="evidence" value="ECO:0007669"/>
    <property type="project" value="UniProtKB-SubCell"/>
</dbReference>
<dbReference type="GO" id="GO:0043772">
    <property type="term" value="F:acyl-phosphate glycerol-3-phosphate acyltransferase activity"/>
    <property type="evidence" value="ECO:0007669"/>
    <property type="project" value="UniProtKB-UniRule"/>
</dbReference>
<dbReference type="GO" id="GO:0008654">
    <property type="term" value="P:phospholipid biosynthetic process"/>
    <property type="evidence" value="ECO:0007669"/>
    <property type="project" value="UniProtKB-UniRule"/>
</dbReference>
<dbReference type="HAMAP" id="MF_01043">
    <property type="entry name" value="PlsY"/>
    <property type="match status" value="1"/>
</dbReference>
<dbReference type="InterPro" id="IPR003811">
    <property type="entry name" value="G3P_acylTferase_PlsY"/>
</dbReference>
<dbReference type="NCBIfam" id="TIGR00023">
    <property type="entry name" value="glycerol-3-phosphate 1-O-acyltransferase PlsY"/>
    <property type="match status" value="1"/>
</dbReference>
<dbReference type="PANTHER" id="PTHR30309:SF0">
    <property type="entry name" value="GLYCEROL-3-PHOSPHATE ACYLTRANSFERASE-RELATED"/>
    <property type="match status" value="1"/>
</dbReference>
<dbReference type="PANTHER" id="PTHR30309">
    <property type="entry name" value="INNER MEMBRANE PROTEIN YGIH"/>
    <property type="match status" value="1"/>
</dbReference>
<dbReference type="Pfam" id="PF02660">
    <property type="entry name" value="G3P_acyltransf"/>
    <property type="match status" value="1"/>
</dbReference>
<dbReference type="SMART" id="SM01207">
    <property type="entry name" value="G3P_acyltransf"/>
    <property type="match status" value="1"/>
</dbReference>
<sequence length="198" mass="21732">MHILIISISYFLGSLPTGFLFGKFLKNIDLRLTGSGSTGATNVLRNVGKWPAFFVFIIDVGKGLIAVKIAQHYTNQNLFEVLAGIAAISGHIWPIWLKGKGGKAVATGLGMFIALSWKIGFASLGIFLIILAKSKIVSLSSISAAIFLPFLMFLDIGSTNHPYFFISLVVSILVIWKHRTNIRRLLKGEELKINDINK</sequence>
<proteinExistence type="inferred from homology"/>